<sequence length="197" mass="21890">MAERKASVERDTLETQIKASINLDGTGKARFDIGVPFLEHMLDQIARHGLIDLDIESKGDLHIDDHHTVEDVGITLGQAFSKAIGDKKGIRRYGHAYVPLDEALSRVVIDFSGRPGLQMHVPFTRATVGGFDVDLFQEFFQGFVNHANVTLHIDTLRGTNTHHQIETVFKAFGRALRMAVELDERMAGQMPSTKGVL</sequence>
<keyword id="KW-0028">Amino-acid biosynthesis</keyword>
<keyword id="KW-0963">Cytoplasm</keyword>
<keyword id="KW-0368">Histidine biosynthesis</keyword>
<keyword id="KW-0456">Lyase</keyword>
<evidence type="ECO:0000255" key="1">
    <source>
        <dbReference type="HAMAP-Rule" id="MF_00076"/>
    </source>
</evidence>
<protein>
    <recommendedName>
        <fullName evidence="1">Imidazoleglycerol-phosphate dehydratase</fullName>
        <shortName evidence="1">IGPD</shortName>
        <ecNumber evidence="1">4.2.1.19</ecNumber>
    </recommendedName>
</protein>
<feature type="chain" id="PRO_1000010332" description="Imidazoleglycerol-phosphate dehydratase">
    <location>
        <begin position="1"/>
        <end position="197"/>
    </location>
</feature>
<gene>
    <name evidence="1" type="primary">hisB</name>
    <name type="ordered locus">PFL_0361</name>
</gene>
<name>HIS7_PSEF5</name>
<comment type="catalytic activity">
    <reaction evidence="1">
        <text>D-erythro-1-(imidazol-4-yl)glycerol 3-phosphate = 3-(imidazol-4-yl)-2-oxopropyl phosphate + H2O</text>
        <dbReference type="Rhea" id="RHEA:11040"/>
        <dbReference type="ChEBI" id="CHEBI:15377"/>
        <dbReference type="ChEBI" id="CHEBI:57766"/>
        <dbReference type="ChEBI" id="CHEBI:58278"/>
        <dbReference type="EC" id="4.2.1.19"/>
    </reaction>
</comment>
<comment type="pathway">
    <text evidence="1">Amino-acid biosynthesis; L-histidine biosynthesis; L-histidine from 5-phospho-alpha-D-ribose 1-diphosphate: step 6/9.</text>
</comment>
<comment type="subcellular location">
    <subcellularLocation>
        <location evidence="1">Cytoplasm</location>
    </subcellularLocation>
</comment>
<comment type="similarity">
    <text evidence="1">Belongs to the imidazoleglycerol-phosphate dehydratase family.</text>
</comment>
<reference key="1">
    <citation type="journal article" date="2005" name="Nat. Biotechnol.">
        <title>Complete genome sequence of the plant commensal Pseudomonas fluorescens Pf-5.</title>
        <authorList>
            <person name="Paulsen I.T."/>
            <person name="Press C.M."/>
            <person name="Ravel J."/>
            <person name="Kobayashi D.Y."/>
            <person name="Myers G.S.A."/>
            <person name="Mavrodi D.V."/>
            <person name="DeBoy R.T."/>
            <person name="Seshadri R."/>
            <person name="Ren Q."/>
            <person name="Madupu R."/>
            <person name="Dodson R.J."/>
            <person name="Durkin A.S."/>
            <person name="Brinkac L.M."/>
            <person name="Daugherty S.C."/>
            <person name="Sullivan S.A."/>
            <person name="Rosovitz M.J."/>
            <person name="Gwinn M.L."/>
            <person name="Zhou L."/>
            <person name="Schneider D.J."/>
            <person name="Cartinhour S.W."/>
            <person name="Nelson W.C."/>
            <person name="Weidman J."/>
            <person name="Watkins K."/>
            <person name="Tran K."/>
            <person name="Khouri H."/>
            <person name="Pierson E.A."/>
            <person name="Pierson L.S. III"/>
            <person name="Thomashow L.S."/>
            <person name="Loper J.E."/>
        </authorList>
    </citation>
    <scope>NUCLEOTIDE SEQUENCE [LARGE SCALE GENOMIC DNA]</scope>
    <source>
        <strain>ATCC BAA-477 / NRRL B-23932 / Pf-5</strain>
    </source>
</reference>
<dbReference type="EC" id="4.2.1.19" evidence="1"/>
<dbReference type="EMBL" id="CP000076">
    <property type="protein sequence ID" value="AAY95770.1"/>
    <property type="molecule type" value="Genomic_DNA"/>
</dbReference>
<dbReference type="RefSeq" id="WP_011058736.1">
    <property type="nucleotide sequence ID" value="NC_004129.6"/>
</dbReference>
<dbReference type="SMR" id="Q4KJS8"/>
<dbReference type="STRING" id="220664.PFL_0361"/>
<dbReference type="GeneID" id="57473350"/>
<dbReference type="KEGG" id="pfl:PFL_0361"/>
<dbReference type="eggNOG" id="COG0131">
    <property type="taxonomic scope" value="Bacteria"/>
</dbReference>
<dbReference type="HOGENOM" id="CLU_044308_3_0_6"/>
<dbReference type="UniPathway" id="UPA00031">
    <property type="reaction ID" value="UER00011"/>
</dbReference>
<dbReference type="Proteomes" id="UP000008540">
    <property type="component" value="Chromosome"/>
</dbReference>
<dbReference type="GO" id="GO:0005737">
    <property type="term" value="C:cytoplasm"/>
    <property type="evidence" value="ECO:0007669"/>
    <property type="project" value="UniProtKB-SubCell"/>
</dbReference>
<dbReference type="GO" id="GO:0004424">
    <property type="term" value="F:imidazoleglycerol-phosphate dehydratase activity"/>
    <property type="evidence" value="ECO:0007669"/>
    <property type="project" value="UniProtKB-UniRule"/>
</dbReference>
<dbReference type="GO" id="GO:0000105">
    <property type="term" value="P:L-histidine biosynthetic process"/>
    <property type="evidence" value="ECO:0007669"/>
    <property type="project" value="UniProtKB-UniRule"/>
</dbReference>
<dbReference type="CDD" id="cd07914">
    <property type="entry name" value="IGPD"/>
    <property type="match status" value="1"/>
</dbReference>
<dbReference type="FunFam" id="3.30.230.40:FF:000002">
    <property type="entry name" value="Imidazoleglycerol-phosphate dehydratase"/>
    <property type="match status" value="1"/>
</dbReference>
<dbReference type="FunFam" id="3.30.230.40:FF:000003">
    <property type="entry name" value="Imidazoleglycerol-phosphate dehydratase HisB"/>
    <property type="match status" value="1"/>
</dbReference>
<dbReference type="Gene3D" id="3.30.230.40">
    <property type="entry name" value="Imidazole glycerol phosphate dehydratase, domain 1"/>
    <property type="match status" value="2"/>
</dbReference>
<dbReference type="HAMAP" id="MF_00076">
    <property type="entry name" value="HisB"/>
    <property type="match status" value="1"/>
</dbReference>
<dbReference type="InterPro" id="IPR038494">
    <property type="entry name" value="IGPD_sf"/>
</dbReference>
<dbReference type="InterPro" id="IPR000807">
    <property type="entry name" value="ImidazoleglycerolP_deHydtase"/>
</dbReference>
<dbReference type="InterPro" id="IPR020565">
    <property type="entry name" value="ImidazoleglycerP_deHydtase_CS"/>
</dbReference>
<dbReference type="InterPro" id="IPR020568">
    <property type="entry name" value="Ribosomal_Su5_D2-typ_SF"/>
</dbReference>
<dbReference type="NCBIfam" id="NF002106">
    <property type="entry name" value="PRK00951.1-1"/>
    <property type="match status" value="1"/>
</dbReference>
<dbReference type="NCBIfam" id="NF002109">
    <property type="entry name" value="PRK00951.1-5"/>
    <property type="match status" value="1"/>
</dbReference>
<dbReference type="NCBIfam" id="NF002111">
    <property type="entry name" value="PRK00951.2-1"/>
    <property type="match status" value="1"/>
</dbReference>
<dbReference type="NCBIfam" id="NF002114">
    <property type="entry name" value="PRK00951.2-4"/>
    <property type="match status" value="1"/>
</dbReference>
<dbReference type="PANTHER" id="PTHR23133:SF2">
    <property type="entry name" value="IMIDAZOLEGLYCEROL-PHOSPHATE DEHYDRATASE"/>
    <property type="match status" value="1"/>
</dbReference>
<dbReference type="PANTHER" id="PTHR23133">
    <property type="entry name" value="IMIDAZOLEGLYCEROL-PHOSPHATE DEHYDRATASE HIS7"/>
    <property type="match status" value="1"/>
</dbReference>
<dbReference type="Pfam" id="PF00475">
    <property type="entry name" value="IGPD"/>
    <property type="match status" value="1"/>
</dbReference>
<dbReference type="SUPFAM" id="SSF54211">
    <property type="entry name" value="Ribosomal protein S5 domain 2-like"/>
    <property type="match status" value="2"/>
</dbReference>
<dbReference type="PROSITE" id="PS00954">
    <property type="entry name" value="IGP_DEHYDRATASE_1"/>
    <property type="match status" value="1"/>
</dbReference>
<dbReference type="PROSITE" id="PS00955">
    <property type="entry name" value="IGP_DEHYDRATASE_2"/>
    <property type="match status" value="1"/>
</dbReference>
<proteinExistence type="inferred from homology"/>
<organism>
    <name type="scientific">Pseudomonas fluorescens (strain ATCC BAA-477 / NRRL B-23932 / Pf-5)</name>
    <dbReference type="NCBI Taxonomy" id="220664"/>
    <lineage>
        <taxon>Bacteria</taxon>
        <taxon>Pseudomonadati</taxon>
        <taxon>Pseudomonadota</taxon>
        <taxon>Gammaproteobacteria</taxon>
        <taxon>Pseudomonadales</taxon>
        <taxon>Pseudomonadaceae</taxon>
        <taxon>Pseudomonas</taxon>
    </lineage>
</organism>
<accession>Q4KJS8</accession>